<gene>
    <name type="primary">OPG136</name>
    <name type="ORF">MPXVgp121</name>
</gene>
<evidence type="ECO:0000250" key="1">
    <source>
        <dbReference type="UniProtKB" id="P16715"/>
    </source>
</evidence>
<evidence type="ECO:0000305" key="2"/>
<evidence type="ECO:0000312" key="3">
    <source>
        <dbReference type="EMBL" id="QNP12991.1"/>
    </source>
</evidence>
<evidence type="ECO:0000312" key="4">
    <source>
        <dbReference type="Proteomes" id="UP000516359"/>
    </source>
</evidence>
<protein>
    <recommendedName>
        <fullName>Major core protein OPG136 precursor</fullName>
    </recommendedName>
    <component>
        <recommendedName>
            <fullName>Core protein OPG136</fullName>
        </recommendedName>
        <alternativeName>
            <fullName>62 kDa peptide</fullName>
        </alternativeName>
    </component>
    <component>
        <recommendedName>
            <fullName>23 kDa protein</fullName>
            <shortName>23K</shortName>
        </recommendedName>
    </component>
</protein>
<dbReference type="EMBL" id="MT903340">
    <property type="protein sequence ID" value="QNP12991.1"/>
    <property type="molecule type" value="Genomic_DNA"/>
</dbReference>
<dbReference type="RefSeq" id="YP_010377118.1">
    <property type="nucleotide sequence ID" value="NC_063383.1"/>
</dbReference>
<dbReference type="SMR" id="A0A7H0DNA8"/>
<dbReference type="GeneID" id="72551531"/>
<dbReference type="Proteomes" id="UP000516359">
    <property type="component" value="Genome"/>
</dbReference>
<dbReference type="GO" id="GO:0044423">
    <property type="term" value="C:virion component"/>
    <property type="evidence" value="ECO:0007669"/>
    <property type="project" value="UniProtKB-KW"/>
</dbReference>
<dbReference type="GO" id="GO:0005198">
    <property type="term" value="F:structural molecule activity"/>
    <property type="evidence" value="ECO:0007669"/>
    <property type="project" value="InterPro"/>
</dbReference>
<dbReference type="InterPro" id="IPR005058">
    <property type="entry name" value="Poxvirus_P4A"/>
</dbReference>
<dbReference type="Pfam" id="PF03395">
    <property type="entry name" value="Pox_P4A"/>
    <property type="match status" value="1"/>
</dbReference>
<accession>A0A7H0DNA8</accession>
<organismHost>
    <name type="scientific">Cynomys gunnisoni</name>
    <name type="common">Gunnison's prairie dog</name>
    <name type="synonym">Spermophilus gunnisoni</name>
    <dbReference type="NCBI Taxonomy" id="45479"/>
</organismHost>
<organismHost>
    <name type="scientific">Cynomys leucurus</name>
    <name type="common">White-tailed prairie dog</name>
    <dbReference type="NCBI Taxonomy" id="99825"/>
</organismHost>
<organismHost>
    <name type="scientific">Cynomys ludovicianus</name>
    <name type="common">Black-tailed prairie dog</name>
    <dbReference type="NCBI Taxonomy" id="45480"/>
</organismHost>
<organismHost>
    <name type="scientific">Cynomys mexicanus</name>
    <name type="common">Mexican prairie dog</name>
    <dbReference type="NCBI Taxonomy" id="99826"/>
</organismHost>
<organismHost>
    <name type="scientific">Cynomys parvidens</name>
    <name type="common">Utah prairie dog</name>
    <dbReference type="NCBI Taxonomy" id="99827"/>
</organismHost>
<organismHost>
    <name type="scientific">Gliridae</name>
    <name type="common">dormice</name>
    <dbReference type="NCBI Taxonomy" id="30650"/>
</organismHost>
<organismHost>
    <name type="scientific">Heliosciurus ruwenzorii</name>
    <name type="common">Ruwenzori sun squirrel</name>
    <dbReference type="NCBI Taxonomy" id="226685"/>
</organismHost>
<organismHost>
    <name type="scientific">Homo sapiens</name>
    <name type="common">Human</name>
    <dbReference type="NCBI Taxonomy" id="9606"/>
</organismHost>
<organismHost>
    <name type="scientific">Mus musculus</name>
    <name type="common">Mouse</name>
    <dbReference type="NCBI Taxonomy" id="10090"/>
</organismHost>
<organism evidence="3 4">
    <name type="scientific">Monkeypox virus</name>
    <dbReference type="NCBI Taxonomy" id="10244"/>
    <lineage>
        <taxon>Viruses</taxon>
        <taxon>Varidnaviria</taxon>
        <taxon>Bamfordvirae</taxon>
        <taxon>Nucleocytoviricota</taxon>
        <taxon>Pokkesviricetes</taxon>
        <taxon>Chitovirales</taxon>
        <taxon>Poxviridae</taxon>
        <taxon>Chordopoxvirinae</taxon>
        <taxon>Orthopoxvirus</taxon>
    </lineage>
</organism>
<comment type="function">
    <text evidence="1">Core protein 4a is the most abundant virion protein. Major component of the virion core that undergoes proteolytic processing during the immature virion (IV) to mature virion (MV) transition.</text>
</comment>
<comment type="subunit">
    <text evidence="1">Interacts with P39/A4.</text>
</comment>
<comment type="subcellular location">
    <molecule>Core protein OPG136</molecule>
    <subcellularLocation>
        <location evidence="1">Virion</location>
    </subcellularLocation>
    <text evidence="1">Probably localizes to the virion core wall.</text>
</comment>
<comment type="PTM">
    <text evidence="1">The precursor is cleaved by OPG083 to give rise to the 62 kDa mature protein during virion maturation. Proteolytic cleavage of major core proteins OPG136, OPG129, and OPG098, which occurs at a late stage of core formation, is required for production of infectious mature virions (MV).</text>
</comment>
<comment type="similarity">
    <text evidence="2">Belongs to the orthopxvirus protein OPG136 family.</text>
</comment>
<proteinExistence type="inferred from homology"/>
<feature type="chain" id="PRO_0000457498" description="Major core protein OPG136 precursor" evidence="1">
    <location>
        <begin position="1"/>
        <end position="891"/>
    </location>
</feature>
<feature type="chain" id="PRO_0000457499" description="Core protein OPG136" evidence="1">
    <location>
        <begin position="1"/>
        <end position="614"/>
    </location>
</feature>
<feature type="propeptide" id="PRO_0000457500" evidence="1">
    <location>
        <begin position="615"/>
        <end position="697"/>
    </location>
</feature>
<feature type="chain" id="PRO_0000457501" description="23 kDa protein" evidence="1">
    <location>
        <begin position="698"/>
        <end position="891"/>
    </location>
</feature>
<feature type="site" description="Cleavage; by OPG083" evidence="1">
    <location>
        <begin position="614"/>
        <end position="615"/>
    </location>
</feature>
<feature type="site" description="Cleavage; by OPG083" evidence="1">
    <location>
        <begin position="697"/>
        <end position="698"/>
    </location>
</feature>
<reference key="1">
    <citation type="journal article" date="2022" name="J. Infect. Dis.">
        <title>Exportation of Monkeypox virus from the African continent.</title>
        <authorList>
            <person name="Mauldin M.R."/>
            <person name="McCollum A.M."/>
            <person name="Nakazawa Y.J."/>
            <person name="Mandra A."/>
            <person name="Whitehouse E.R."/>
            <person name="Davidson W."/>
            <person name="Zhao H."/>
            <person name="Gao J."/>
            <person name="Li Y."/>
            <person name="Doty J."/>
            <person name="Yinka-Ogunleye A."/>
            <person name="Akinpelu A."/>
            <person name="Aruna O."/>
            <person name="Naidoo D."/>
            <person name="Lewandowski K."/>
            <person name="Afrough B."/>
            <person name="Graham V."/>
            <person name="Aarons E."/>
            <person name="Hewson R."/>
            <person name="Vipond R."/>
            <person name="Dunning J."/>
            <person name="Chand M."/>
            <person name="Brown C."/>
            <person name="Cohen-Gihon I."/>
            <person name="Erez N."/>
            <person name="Shifman O."/>
            <person name="Israeli O."/>
            <person name="Sharon M."/>
            <person name="Schwartz E."/>
            <person name="Beth-Din A."/>
            <person name="Zvi A."/>
            <person name="Mak T.M."/>
            <person name="Ng Y.K."/>
            <person name="Cui L."/>
            <person name="Lin R.T.P."/>
            <person name="Olson V.A."/>
            <person name="Brooks T."/>
            <person name="Paran N."/>
            <person name="Ihekweazu C."/>
            <person name="Reynolds M.G."/>
        </authorList>
    </citation>
    <scope>NUCLEOTIDE SEQUENCE [LARGE SCALE GENOMIC DNA]</scope>
    <source>
        <strain>MPXV-M5312_HM12_Rivers</strain>
    </source>
</reference>
<name>PG136_MONPV</name>
<keyword id="KW-1185">Reference proteome</keyword>
<keyword id="KW-0946">Virion</keyword>
<sequence length="891" mass="102236">MMPIKSIVTLDQLEDSEYLFRIVSTVLPHLCLDYKVCDQLKTTFVHPFDVFLNNSLGSVTKQDELQATISKLGINYLIDTTSRELKLFNVTLNAGNIDIINHPINISSETNPIINTHSFYDLPPFTQHLLNIRLTDTEYRARFIGGYIKPDGSDSMDVLAEKKYPDLNFDNTYLFNILYKDVINAPIKEFKAKIVNGVLSRQDFDNLIGVRQYITAQDQPRFDITYNIADAARHYGVNLNTLPLPNVDLTTMPTYKHLIMYEQYFVDDYDRVPIYYNGNRVIFNDEIINFTISMRYQSLIPRLVDFFPDIPVNNNIVLHTRDPQNAAVNVTVALPNVQFVDINRNNKFFINFFNLLAKEQRSTAIKVTKSMFWDGIDYEEYKSKTLQDMMFINSTCYVFGLYNHNNTTYCSILSDIISAEKTPIRVCLLPRVVGGKTVTNLISETLKSISSITIREFPRKDKSIMHIGLSETGFMRFFQLLRLMADKPHETAIKEVVMAYVGIKLGDKGSPYYIRKESYQDFIYLLFASMGFKVTTRRSIMGSNNISIISIRPRVTKQYIVTTLMKTSCSKNEAEKLITSAFDLLNFMVSVSDFRDYQSYRQYRNYCPRYFYAGSPEGEETIICDSEPISILDRIDTRGIFSAYTINEMMDTDIFSPENKAFKNNLSRFIESGDITGEDIFCAMPYNILDRIITNAGTCTVSIGDMLDNITTQSDCNMTNEITDMINASLKNTISKDNNMLVSQALDSVANRSKQTIGDLRQSSCKMALLFKNLATSIYTIERIFNAKVCDDVKASMLEKYKAFTDISMSLYKDLIAMENLKAMLYIIRRSGCRIDDAQITTDDLVKSYSLIRPKILSMINYYNEMSRGYFEHMKKNLNMTDGDSVSFDDE</sequence>